<keyword id="KW-0274">FAD</keyword>
<keyword id="KW-0285">Flavoprotein</keyword>
<keyword id="KW-0560">Oxidoreductase</keyword>
<keyword id="KW-1185">Reference proteome</keyword>
<keyword id="KW-0732">Signal</keyword>
<keyword id="KW-0843">Virulence</keyword>
<reference key="1">
    <citation type="journal article" date="2005" name="Nature">
        <title>Genome sequencing and analysis of Aspergillus oryzae.</title>
        <authorList>
            <person name="Machida M."/>
            <person name="Asai K."/>
            <person name="Sano M."/>
            <person name="Tanaka T."/>
            <person name="Kumagai T."/>
            <person name="Terai G."/>
            <person name="Kusumoto K."/>
            <person name="Arima T."/>
            <person name="Akita O."/>
            <person name="Kashiwagi Y."/>
            <person name="Abe K."/>
            <person name="Gomi K."/>
            <person name="Horiuchi H."/>
            <person name="Kitamoto K."/>
            <person name="Kobayashi T."/>
            <person name="Takeuchi M."/>
            <person name="Denning D.W."/>
            <person name="Galagan J.E."/>
            <person name="Nierman W.C."/>
            <person name="Yu J."/>
            <person name="Archer D.B."/>
            <person name="Bennett J.W."/>
            <person name="Bhatnagar D."/>
            <person name="Cleveland T.E."/>
            <person name="Fedorova N.D."/>
            <person name="Gotoh O."/>
            <person name="Horikawa H."/>
            <person name="Hosoyama A."/>
            <person name="Ichinomiya M."/>
            <person name="Igarashi R."/>
            <person name="Iwashita K."/>
            <person name="Juvvadi P.R."/>
            <person name="Kato M."/>
            <person name="Kato Y."/>
            <person name="Kin T."/>
            <person name="Kokubun A."/>
            <person name="Maeda H."/>
            <person name="Maeyama N."/>
            <person name="Maruyama J."/>
            <person name="Nagasaki H."/>
            <person name="Nakajima T."/>
            <person name="Oda K."/>
            <person name="Okada K."/>
            <person name="Paulsen I."/>
            <person name="Sakamoto K."/>
            <person name="Sawano T."/>
            <person name="Takahashi M."/>
            <person name="Takase K."/>
            <person name="Terabayashi Y."/>
            <person name="Wortman J.R."/>
            <person name="Yamada O."/>
            <person name="Yamagata Y."/>
            <person name="Anazawa H."/>
            <person name="Hata Y."/>
            <person name="Koide Y."/>
            <person name="Komori T."/>
            <person name="Koyama Y."/>
            <person name="Minetoki T."/>
            <person name="Suharnan S."/>
            <person name="Tanaka A."/>
            <person name="Isono K."/>
            <person name="Kuhara S."/>
            <person name="Ogasawara N."/>
            <person name="Kikuchi H."/>
        </authorList>
    </citation>
    <scope>NUCLEOTIDE SEQUENCE [LARGE SCALE GENOMIC DNA]</scope>
    <source>
        <strain>ATCC 42149 / RIB 40</strain>
    </source>
</reference>
<reference key="2">
    <citation type="journal article" date="2011" name="ChemBioChem">
        <title>Genetic safeguard against mycotoxin cyclopiazonic acid production in Aspergillus oryzae.</title>
        <authorList>
            <person name="Kato N."/>
            <person name="Tokuoka M."/>
            <person name="Shinohara Y."/>
            <person name="Kawatani M."/>
            <person name="Uramoto M."/>
            <person name="Seshime Y."/>
            <person name="Fujii I."/>
            <person name="Kitamoto K."/>
            <person name="Takahashi T."/>
            <person name="Takahashi S."/>
            <person name="Koyama Y."/>
            <person name="Osada H."/>
        </authorList>
    </citation>
    <scope>FUNCTION</scope>
    <scope>CATALYTIC ACTIVITY</scope>
    <source>
        <strain>NBRC 4177</strain>
    </source>
</reference>
<evidence type="ECO:0000250" key="1">
    <source>
        <dbReference type="UniProtKB" id="B8NI10"/>
    </source>
</evidence>
<evidence type="ECO:0000250" key="2">
    <source>
        <dbReference type="UniProtKB" id="F5HN72"/>
    </source>
</evidence>
<evidence type="ECO:0000255" key="3"/>
<evidence type="ECO:0000303" key="4">
    <source>
    </source>
</evidence>
<evidence type="ECO:0000305" key="5"/>
<evidence type="ECO:0000312" key="6">
    <source>
        <dbReference type="EMBL" id="BAE59504.1"/>
    </source>
</evidence>
<sequence>MAVRIARFLGLSTVAYLALANGIDARDTISRDVIILGGGSSGTYAAIRLRDQGKTVAVVERNNYLGGHGETYYTEDNTPLNFGVEGFFNTTVTRNYLERLQVPYGRRDPAPAHEDYVNLNTGQRTEYTPGQLQDREAFAKWVDAISQFGFLDDGVYRIPEPVPEDLISPFADFVKKYHLEDAVYALFSHTSGDVLEMITLYVIQYIGVPHAAALNEGYVRPIEGIAALYKSAGKELGSDVLLETTPEAVQRFEDGVEVIVRSADGTKTLLKGKQLLVTIPPLLENLHGFPLSDQESRLFSKWQYHQYWAALVNDTGLPDDVNIVNVDTERLYGVPEEPFIWRLDNHWAPGYHNIKLVGGSEFGEDEAKAYMYERLDLLHAEGTYATHKPEIVKFASHTPVTMFVSAEEIRGGFYRQLYELQGLNSTFWTGATWASDYSTLLWGYTDEVLDQMASS</sequence>
<gene>
    <name evidence="2" type="primary">cpaO</name>
    <name evidence="6" type="ORF">AO090026000003</name>
</gene>
<name>CPAO_ASPOR</name>
<accession>Q2UG11</accession>
<organism evidence="6">
    <name type="scientific">Aspergillus oryzae (strain ATCC 42149 / RIB 40)</name>
    <name type="common">Yellow koji mold</name>
    <dbReference type="NCBI Taxonomy" id="510516"/>
    <lineage>
        <taxon>Eukaryota</taxon>
        <taxon>Fungi</taxon>
        <taxon>Dikarya</taxon>
        <taxon>Ascomycota</taxon>
        <taxon>Pezizomycotina</taxon>
        <taxon>Eurotiomycetes</taxon>
        <taxon>Eurotiomycetidae</taxon>
        <taxon>Eurotiales</taxon>
        <taxon>Aspergillaceae</taxon>
        <taxon>Aspergillus</taxon>
        <taxon>Aspergillus subgen. Circumdati</taxon>
    </lineage>
</organism>
<proteinExistence type="evidence at protein level"/>
<feature type="signal peptide" evidence="3">
    <location>
        <begin position="1"/>
        <end position="25"/>
    </location>
</feature>
<feature type="chain" id="PRO_0000430692" description="Beta-cyclopiazonate dehydrogenase">
    <location>
        <begin position="26"/>
        <end position="455"/>
    </location>
</feature>
<protein>
    <recommendedName>
        <fullName evidence="4">Beta-cyclopiazonate dehydrogenase</fullName>
        <ecNumber evidence="4">1.21.99.1</ecNumber>
    </recommendedName>
    <alternativeName>
        <fullName evidence="4">Beta-Cyclopiazonate oxidocyclase</fullName>
    </alternativeName>
    <alternativeName>
        <fullName evidence="5">FAD-dependent oxidoreductase cpaO</fullName>
    </alternativeName>
</protein>
<dbReference type="EC" id="1.21.99.1" evidence="4"/>
<dbReference type="EMBL" id="BA000051">
    <property type="protein sequence ID" value="BAE59504.1"/>
    <property type="molecule type" value="Genomic_DNA"/>
</dbReference>
<dbReference type="RefSeq" id="XP_001821506.1">
    <property type="nucleotide sequence ID" value="XM_001821454.2"/>
</dbReference>
<dbReference type="SMR" id="Q2UG11"/>
<dbReference type="STRING" id="510516.Q2UG11"/>
<dbReference type="EnsemblFungi" id="BAE59504">
    <property type="protein sequence ID" value="BAE59504"/>
    <property type="gene ID" value="AO090026000003"/>
</dbReference>
<dbReference type="GeneID" id="5993534"/>
<dbReference type="KEGG" id="aor:AO090026000003"/>
<dbReference type="VEuPathDB" id="FungiDB:AO090026000003"/>
<dbReference type="HOGENOM" id="CLU_028280_0_0_1"/>
<dbReference type="OrthoDB" id="49522at5052"/>
<dbReference type="Proteomes" id="UP000006564">
    <property type="component" value="Chromosome 3"/>
</dbReference>
<dbReference type="GO" id="GO:0050448">
    <property type="term" value="F:beta-cyclopiazonate dehydrogenase activity"/>
    <property type="evidence" value="ECO:0007669"/>
    <property type="project" value="UniProtKB-EC"/>
</dbReference>
<dbReference type="Gene3D" id="1.10.405.20">
    <property type="match status" value="1"/>
</dbReference>
<dbReference type="Gene3D" id="3.30.70.1990">
    <property type="match status" value="1"/>
</dbReference>
<dbReference type="Gene3D" id="3.50.50.60">
    <property type="entry name" value="FAD/NAD(P)-binding domain"/>
    <property type="match status" value="1"/>
</dbReference>
<dbReference type="InterPro" id="IPR002937">
    <property type="entry name" value="Amino_oxidase"/>
</dbReference>
<dbReference type="InterPro" id="IPR036188">
    <property type="entry name" value="FAD/NAD-bd_sf"/>
</dbReference>
<dbReference type="Pfam" id="PF01593">
    <property type="entry name" value="Amino_oxidase"/>
    <property type="match status" value="1"/>
</dbReference>
<dbReference type="SUPFAM" id="SSF51905">
    <property type="entry name" value="FAD/NAD(P)-binding domain"/>
    <property type="match status" value="1"/>
</dbReference>
<comment type="function">
    <text evidence="4">Beta-cyclopiazonate dehydrogenase involved in the synthesis of the fungal neurotoxin alpha-cyclopiazonic acid (CPA). CpaO carries out the dehydrogenation of beta-CPA to yield an unstable enimine product, which is captured by intramolecular cyclization to create the pentacyclic fused scaffold of alpha-cyclopiazonate.</text>
</comment>
<comment type="catalytic activity">
    <reaction evidence="4">
        <text>beta-cyclopiazonate + A = alpha-cyclopiazonate + AH2</text>
        <dbReference type="Rhea" id="RHEA:14525"/>
        <dbReference type="ChEBI" id="CHEBI:13193"/>
        <dbReference type="ChEBI" id="CHEBI:17499"/>
        <dbReference type="ChEBI" id="CHEBI:58067"/>
        <dbReference type="ChEBI" id="CHEBI:58256"/>
        <dbReference type="EC" id="1.21.99.1"/>
    </reaction>
</comment>
<comment type="cofactor">
    <cofactor evidence="1">
        <name>FAD</name>
        <dbReference type="ChEBI" id="CHEBI:57692"/>
    </cofactor>
</comment>
<comment type="similarity">
    <text evidence="5">Belongs to the beta-cyclopiazonate dehydrogenase family.</text>
</comment>